<evidence type="ECO:0000250" key="1"/>
<evidence type="ECO:0000250" key="2">
    <source>
        <dbReference type="UniProtKB" id="Q9X1H9"/>
    </source>
</evidence>
<evidence type="ECO:0000255" key="3">
    <source>
        <dbReference type="PROSITE-ProRule" id="PRU00815"/>
    </source>
</evidence>
<keyword id="KW-0446">Lipid-binding</keyword>
<comment type="function">
    <text evidence="1">May bind long-chain fatty acids, such as palmitate, and may play a role in lipid transport or fatty acid metabolism.</text>
</comment>
<gene>
    <name type="ordered locus">M6_Spy1658</name>
</gene>
<accession>Q5X9X0</accession>
<protein>
    <recommendedName>
        <fullName>DegV domain-containing protein M6_Spy1658</fullName>
    </recommendedName>
</protein>
<proteinExistence type="inferred from homology"/>
<dbReference type="EMBL" id="CP000003">
    <property type="protein sequence ID" value="AAT87793.1"/>
    <property type="molecule type" value="Genomic_DNA"/>
</dbReference>
<dbReference type="RefSeq" id="WP_002982687.1">
    <property type="nucleotide sequence ID" value="NC_006086.1"/>
</dbReference>
<dbReference type="SMR" id="Q5X9X0"/>
<dbReference type="KEGG" id="spa:M6_Spy1658"/>
<dbReference type="HOGENOM" id="CLU_048251_4_1_9"/>
<dbReference type="Proteomes" id="UP000001167">
    <property type="component" value="Chromosome"/>
</dbReference>
<dbReference type="GO" id="GO:0008289">
    <property type="term" value="F:lipid binding"/>
    <property type="evidence" value="ECO:0007669"/>
    <property type="project" value="UniProtKB-KW"/>
</dbReference>
<dbReference type="Gene3D" id="3.30.1180.10">
    <property type="match status" value="1"/>
</dbReference>
<dbReference type="Gene3D" id="2.20.28.50">
    <property type="entry name" value="degv family protein"/>
    <property type="match status" value="1"/>
</dbReference>
<dbReference type="Gene3D" id="3.40.50.10440">
    <property type="entry name" value="Dihydroxyacetone kinase, domain 1"/>
    <property type="match status" value="1"/>
</dbReference>
<dbReference type="InterPro" id="IPR003797">
    <property type="entry name" value="DegV"/>
</dbReference>
<dbReference type="InterPro" id="IPR043168">
    <property type="entry name" value="DegV_C"/>
</dbReference>
<dbReference type="InterPro" id="IPR050270">
    <property type="entry name" value="DegV_domain_contain"/>
</dbReference>
<dbReference type="NCBIfam" id="TIGR00762">
    <property type="entry name" value="DegV"/>
    <property type="match status" value="1"/>
</dbReference>
<dbReference type="PANTHER" id="PTHR33434">
    <property type="entry name" value="DEGV DOMAIN-CONTAINING PROTEIN DR_1986-RELATED"/>
    <property type="match status" value="1"/>
</dbReference>
<dbReference type="PANTHER" id="PTHR33434:SF2">
    <property type="entry name" value="FATTY ACID-BINDING PROTEIN TM_1468"/>
    <property type="match status" value="1"/>
</dbReference>
<dbReference type="Pfam" id="PF02645">
    <property type="entry name" value="DegV"/>
    <property type="match status" value="1"/>
</dbReference>
<dbReference type="SUPFAM" id="SSF82549">
    <property type="entry name" value="DAK1/DegV-like"/>
    <property type="match status" value="1"/>
</dbReference>
<dbReference type="PROSITE" id="PS51482">
    <property type="entry name" value="DEGV"/>
    <property type="match status" value="1"/>
</dbReference>
<sequence>MTFTIMTDSTADLNQTWAEDHDIVLIGLTILCDGEVYETVGPNRISSDYLLKKMKAGSHPQTSQINVGEFEKVFREHARNNKALLYLAFSSVLSGTYQSALMARDLVREDYPDAVIEIVDTLAAAGGEGYLTILAAEARDSGKNLLETKDIVEAVIPRLRTYFLVDDLFHLMRGGRLSKGSAFLGSLASIKPLLWIDEEGKLVPIAKIRGRQKAIKEMVAQVEKDIADSTVIVSYTSDQGSAEKLREELLAHENISDVLMMPLGPVISAHVGPNTLAVFVIGQNSR</sequence>
<reference key="1">
    <citation type="journal article" date="2004" name="J. Infect. Dis.">
        <title>Progress toward characterization of the group A Streptococcus metagenome: complete genome sequence of a macrolide-resistant serotype M6 strain.</title>
        <authorList>
            <person name="Banks D.J."/>
            <person name="Porcella S.F."/>
            <person name="Barbian K.D."/>
            <person name="Beres S.B."/>
            <person name="Philips L.E."/>
            <person name="Voyich J.M."/>
            <person name="DeLeo F.R."/>
            <person name="Martin J.M."/>
            <person name="Somerville G.A."/>
            <person name="Musser J.M."/>
        </authorList>
    </citation>
    <scope>NUCLEOTIDE SEQUENCE [LARGE SCALE GENOMIC DNA]</scope>
    <source>
        <strain>ATCC BAA-946 / MGAS10394</strain>
    </source>
</reference>
<feature type="chain" id="PRO_0000209814" description="DegV domain-containing protein M6_Spy1658">
    <location>
        <begin position="1"/>
        <end position="286"/>
    </location>
</feature>
<feature type="domain" description="DegV" evidence="3">
    <location>
        <begin position="3"/>
        <end position="282"/>
    </location>
</feature>
<feature type="binding site" evidence="2">
    <location>
        <position position="62"/>
    </location>
    <ligand>
        <name>hexadecanoate</name>
        <dbReference type="ChEBI" id="CHEBI:7896"/>
    </ligand>
</feature>
<feature type="binding site" evidence="2">
    <location>
        <position position="94"/>
    </location>
    <ligand>
        <name>hexadecanoate</name>
        <dbReference type="ChEBI" id="CHEBI:7896"/>
    </ligand>
</feature>
<organism>
    <name type="scientific">Streptococcus pyogenes serotype M6 (strain ATCC BAA-946 / MGAS10394)</name>
    <dbReference type="NCBI Taxonomy" id="286636"/>
    <lineage>
        <taxon>Bacteria</taxon>
        <taxon>Bacillati</taxon>
        <taxon>Bacillota</taxon>
        <taxon>Bacilli</taxon>
        <taxon>Lactobacillales</taxon>
        <taxon>Streptococcaceae</taxon>
        <taxon>Streptococcus</taxon>
    </lineage>
</organism>
<name>Y1658_STRP6</name>